<comment type="function">
    <text evidence="1">DNA repair enzyme involved in the repair of deaminated bases. Selectively cleaves double-stranded DNA at the second phosphodiester bond 3' to a deoxyinosine leaving behind the intact lesion on the nicked DNA.</text>
</comment>
<comment type="catalytic activity">
    <reaction evidence="1">
        <text>Endonucleolytic cleavage at apurinic or apyrimidinic sites to products with a 5'-phosphate.</text>
        <dbReference type="EC" id="3.1.21.7"/>
    </reaction>
</comment>
<comment type="cofactor">
    <cofactor evidence="1 2">
        <name>Mg(2+)</name>
        <dbReference type="ChEBI" id="CHEBI:18420"/>
    </cofactor>
</comment>
<comment type="subcellular location">
    <subcellularLocation>
        <location evidence="1">Cytoplasm</location>
    </subcellularLocation>
</comment>
<comment type="similarity">
    <text evidence="1">Belongs to the endonuclease V family.</text>
</comment>
<protein>
    <recommendedName>
        <fullName evidence="1">Endonuclease V</fullName>
        <ecNumber evidence="1">3.1.21.7</ecNumber>
    </recommendedName>
    <alternativeName>
        <fullName evidence="1">Deoxyinosine 3'endonuclease</fullName>
    </alternativeName>
    <alternativeName>
        <fullName evidence="1">Deoxyribonuclease V</fullName>
        <shortName evidence="1">DNase V</shortName>
    </alternativeName>
</protein>
<name>NFI_STRAW</name>
<feature type="chain" id="PRO_0000159672" description="Endonuclease V">
    <location>
        <begin position="1"/>
        <end position="229"/>
    </location>
</feature>
<feature type="binding site">
    <location>
        <position position="46"/>
    </location>
    <ligand>
        <name>Mg(2+)</name>
        <dbReference type="ChEBI" id="CHEBI:18420"/>
    </ligand>
</feature>
<feature type="binding site">
    <location>
        <position position="114"/>
    </location>
    <ligand>
        <name>Mg(2+)</name>
        <dbReference type="ChEBI" id="CHEBI:18420"/>
    </ligand>
</feature>
<feature type="site" description="Interaction with target DNA" evidence="1">
    <location>
        <position position="84"/>
    </location>
</feature>
<feature type="helix" evidence="3">
    <location>
        <begin position="14"/>
        <end position="24"/>
    </location>
</feature>
<feature type="helix" evidence="3">
    <location>
        <begin position="25"/>
        <end position="27"/>
    </location>
</feature>
<feature type="strand" evidence="3">
    <location>
        <begin position="39"/>
        <end position="49"/>
    </location>
</feature>
<feature type="strand" evidence="3">
    <location>
        <begin position="51"/>
        <end position="64"/>
    </location>
</feature>
<feature type="turn" evidence="3">
    <location>
        <begin position="65"/>
        <end position="67"/>
    </location>
</feature>
<feature type="strand" evidence="3">
    <location>
        <begin position="70"/>
        <end position="79"/>
    </location>
</feature>
<feature type="helix" evidence="3">
    <location>
        <begin position="89"/>
        <end position="92"/>
    </location>
</feature>
<feature type="helix" evidence="3">
    <location>
        <begin position="94"/>
        <end position="102"/>
    </location>
</feature>
<feature type="strand" evidence="3">
    <location>
        <begin position="104"/>
        <end position="106"/>
    </location>
</feature>
<feature type="strand" evidence="3">
    <location>
        <begin position="109"/>
        <end position="115"/>
    </location>
</feature>
<feature type="helix" evidence="3">
    <location>
        <begin position="126"/>
        <end position="134"/>
    </location>
</feature>
<feature type="strand" evidence="3">
    <location>
        <begin position="138"/>
        <end position="144"/>
    </location>
</feature>
<feature type="strand" evidence="3">
    <location>
        <begin position="160"/>
        <end position="165"/>
    </location>
</feature>
<feature type="strand" evidence="3">
    <location>
        <begin position="168"/>
        <end position="174"/>
    </location>
</feature>
<feature type="strand" evidence="3">
    <location>
        <begin position="183"/>
        <end position="190"/>
    </location>
</feature>
<feature type="helix" evidence="3">
    <location>
        <begin position="193"/>
        <end position="202"/>
    </location>
</feature>
<feature type="helix" evidence="3">
    <location>
        <begin position="211"/>
        <end position="228"/>
    </location>
</feature>
<gene>
    <name evidence="1" type="primary">nfi</name>
    <name type="ordered locus">SAV_1684</name>
</gene>
<sequence length="229" mass="23988">MTTVRIPAGWPATEEEARAVQDELRGRVILDEPGPPPGTGRVTGVDVAYDDERDVVVAAAVVLDAATLDVVAEATAVGEVSFPYVPGLLAFREIPTVLAALDALPCPPGLIVCDGYGVAHPRRFGLASHLGVLTGLPTIGVAKNPFTFSYEDPGAPRGSAAPLLAGADEVGRALRTQSGVKPVFVSVGHRVDLDHACAHTLALTPKYRIPETTRRADSLCRRALKEATA</sequence>
<proteinExistence type="evidence at protein level"/>
<organism>
    <name type="scientific">Streptomyces avermitilis (strain ATCC 31267 / DSM 46492 / JCM 5070 / NBRC 14893 / NCIMB 12804 / NRRL 8165 / MA-4680)</name>
    <dbReference type="NCBI Taxonomy" id="227882"/>
    <lineage>
        <taxon>Bacteria</taxon>
        <taxon>Bacillati</taxon>
        <taxon>Actinomycetota</taxon>
        <taxon>Actinomycetes</taxon>
        <taxon>Kitasatosporales</taxon>
        <taxon>Streptomycetaceae</taxon>
        <taxon>Streptomyces</taxon>
    </lineage>
</organism>
<accession>Q82MH6</accession>
<keyword id="KW-0002">3D-structure</keyword>
<keyword id="KW-0963">Cytoplasm</keyword>
<keyword id="KW-0227">DNA damage</keyword>
<keyword id="KW-0234">DNA repair</keyword>
<keyword id="KW-0255">Endonuclease</keyword>
<keyword id="KW-0378">Hydrolase</keyword>
<keyword id="KW-0460">Magnesium</keyword>
<keyword id="KW-0479">Metal-binding</keyword>
<keyword id="KW-0540">Nuclease</keyword>
<keyword id="KW-1185">Reference proteome</keyword>
<reference key="1">
    <citation type="journal article" date="2001" name="Proc. Natl. Acad. Sci. U.S.A.">
        <title>Genome sequence of an industrial microorganism Streptomyces avermitilis: deducing the ability of producing secondary metabolites.</title>
        <authorList>
            <person name="Omura S."/>
            <person name="Ikeda H."/>
            <person name="Ishikawa J."/>
            <person name="Hanamoto A."/>
            <person name="Takahashi C."/>
            <person name="Shinose M."/>
            <person name="Takahashi Y."/>
            <person name="Horikawa H."/>
            <person name="Nakazawa H."/>
            <person name="Osonoe T."/>
            <person name="Kikuchi H."/>
            <person name="Shiba T."/>
            <person name="Sakaki Y."/>
            <person name="Hattori M."/>
        </authorList>
    </citation>
    <scope>NUCLEOTIDE SEQUENCE [LARGE SCALE GENOMIC DNA]</scope>
    <source>
        <strain>ATCC 31267 / DSM 46492 / JCM 5070 / NBRC 14893 / NCIMB 12804 / NRRL 8165 / MA-4680</strain>
    </source>
</reference>
<reference key="2">
    <citation type="journal article" date="2003" name="Nat. Biotechnol.">
        <title>Complete genome sequence and comparative analysis of the industrial microorganism Streptomyces avermitilis.</title>
        <authorList>
            <person name="Ikeda H."/>
            <person name="Ishikawa J."/>
            <person name="Hanamoto A."/>
            <person name="Shinose M."/>
            <person name="Kikuchi H."/>
            <person name="Shiba T."/>
            <person name="Sakaki Y."/>
            <person name="Hattori M."/>
            <person name="Omura S."/>
        </authorList>
    </citation>
    <scope>NUCLEOTIDE SEQUENCE [LARGE SCALE GENOMIC DNA]</scope>
    <source>
        <strain>ATCC 31267 / DSM 46492 / JCM 5070 / NBRC 14893 / NCIMB 12804 / NRRL 8165 / MA-4680</strain>
    </source>
</reference>
<reference key="3">
    <citation type="submission" date="2009-03" db="PDB data bank">
        <title>Crystal structure of the endonuclease V (SAV1684) from Streptomyces avermitilis. Northeast structural genomics consortium target SVR196.</title>
        <authorList>
            <consortium name="Northeast structural genomics consortium (NESG)"/>
        </authorList>
    </citation>
    <scope>X-RAY CRYSTALLOGRAPHY (1.6 ANGSTROMS) IN COMPLEX WITH MAGNESIUM IONS</scope>
    <scope>COFACTOR</scope>
</reference>
<dbReference type="EC" id="3.1.21.7" evidence="1"/>
<dbReference type="EMBL" id="BA000030">
    <property type="protein sequence ID" value="BAC69395.1"/>
    <property type="molecule type" value="Genomic_DNA"/>
</dbReference>
<dbReference type="RefSeq" id="WP_010983123.1">
    <property type="nucleotide sequence ID" value="NZ_JZJK01000086.1"/>
</dbReference>
<dbReference type="PDB" id="3GOC">
    <property type="method" value="X-ray"/>
    <property type="resolution" value="1.60 A"/>
    <property type="chains" value="A/B=1-229"/>
</dbReference>
<dbReference type="PDBsum" id="3GOC"/>
<dbReference type="SMR" id="Q82MH6"/>
<dbReference type="GeneID" id="41538784"/>
<dbReference type="KEGG" id="sma:SAVERM_1684"/>
<dbReference type="eggNOG" id="COG1515">
    <property type="taxonomic scope" value="Bacteria"/>
</dbReference>
<dbReference type="HOGENOM" id="CLU_047631_1_1_11"/>
<dbReference type="OrthoDB" id="9790916at2"/>
<dbReference type="EvolutionaryTrace" id="Q82MH6"/>
<dbReference type="Proteomes" id="UP000000428">
    <property type="component" value="Chromosome"/>
</dbReference>
<dbReference type="GO" id="GO:0005737">
    <property type="term" value="C:cytoplasm"/>
    <property type="evidence" value="ECO:0007669"/>
    <property type="project" value="UniProtKB-SubCell"/>
</dbReference>
<dbReference type="GO" id="GO:0043737">
    <property type="term" value="F:deoxyribonuclease V activity"/>
    <property type="evidence" value="ECO:0007669"/>
    <property type="project" value="UniProtKB-UniRule"/>
</dbReference>
<dbReference type="GO" id="GO:0000287">
    <property type="term" value="F:magnesium ion binding"/>
    <property type="evidence" value="ECO:0007669"/>
    <property type="project" value="UniProtKB-UniRule"/>
</dbReference>
<dbReference type="GO" id="GO:0016891">
    <property type="term" value="F:RNA endonuclease activity, producing 5'-phosphomonoesters"/>
    <property type="evidence" value="ECO:0007669"/>
    <property type="project" value="TreeGrafter"/>
</dbReference>
<dbReference type="GO" id="GO:0003727">
    <property type="term" value="F:single-stranded RNA binding"/>
    <property type="evidence" value="ECO:0007669"/>
    <property type="project" value="TreeGrafter"/>
</dbReference>
<dbReference type="GO" id="GO:0006281">
    <property type="term" value="P:DNA repair"/>
    <property type="evidence" value="ECO:0007669"/>
    <property type="project" value="UniProtKB-UniRule"/>
</dbReference>
<dbReference type="CDD" id="cd06559">
    <property type="entry name" value="Endonuclease_V"/>
    <property type="match status" value="1"/>
</dbReference>
<dbReference type="FunFam" id="3.30.2170.10:FF:000007">
    <property type="entry name" value="Endonuclease V"/>
    <property type="match status" value="1"/>
</dbReference>
<dbReference type="Gene3D" id="3.30.2170.10">
    <property type="entry name" value="archaeoglobus fulgidus dsm 4304 superfamily"/>
    <property type="match status" value="1"/>
</dbReference>
<dbReference type="HAMAP" id="MF_00801">
    <property type="entry name" value="Endonuclease_5"/>
    <property type="match status" value="1"/>
</dbReference>
<dbReference type="InterPro" id="IPR007581">
    <property type="entry name" value="Endonuclease-V"/>
</dbReference>
<dbReference type="PANTHER" id="PTHR28511">
    <property type="entry name" value="ENDONUCLEASE V"/>
    <property type="match status" value="1"/>
</dbReference>
<dbReference type="PANTHER" id="PTHR28511:SF1">
    <property type="entry name" value="ENDONUCLEASE V"/>
    <property type="match status" value="1"/>
</dbReference>
<dbReference type="Pfam" id="PF04493">
    <property type="entry name" value="Endonuclease_5"/>
    <property type="match status" value="1"/>
</dbReference>
<evidence type="ECO:0000255" key="1">
    <source>
        <dbReference type="HAMAP-Rule" id="MF_00801"/>
    </source>
</evidence>
<evidence type="ECO:0000269" key="2">
    <source ref="3"/>
</evidence>
<evidence type="ECO:0007829" key="3">
    <source>
        <dbReference type="PDB" id="3GOC"/>
    </source>
</evidence>